<accession>A7I809</accession>
<keyword id="KW-0067">ATP-binding</keyword>
<keyword id="KW-0963">Cytoplasm</keyword>
<keyword id="KW-0418">Kinase</keyword>
<keyword id="KW-0520">NAD</keyword>
<keyword id="KW-0521">NADP</keyword>
<keyword id="KW-0547">Nucleotide-binding</keyword>
<keyword id="KW-1185">Reference proteome</keyword>
<keyword id="KW-0808">Transferase</keyword>
<comment type="function">
    <text evidence="1">Involved in the regulation of the intracellular balance of NAD and NADP, and is a key enzyme in the biosynthesis of NADP. Catalyzes specifically the phosphorylation on 2'-hydroxyl of the adenosine moiety of NAD to yield NADP.</text>
</comment>
<comment type="catalytic activity">
    <reaction evidence="1">
        <text>NAD(+) + ATP = ADP + NADP(+) + H(+)</text>
        <dbReference type="Rhea" id="RHEA:18629"/>
        <dbReference type="ChEBI" id="CHEBI:15378"/>
        <dbReference type="ChEBI" id="CHEBI:30616"/>
        <dbReference type="ChEBI" id="CHEBI:57540"/>
        <dbReference type="ChEBI" id="CHEBI:58349"/>
        <dbReference type="ChEBI" id="CHEBI:456216"/>
        <dbReference type="EC" id="2.7.1.23"/>
    </reaction>
</comment>
<comment type="cofactor">
    <cofactor evidence="1">
        <name>a divalent metal cation</name>
        <dbReference type="ChEBI" id="CHEBI:60240"/>
    </cofactor>
</comment>
<comment type="subcellular location">
    <subcellularLocation>
        <location evidence="1">Cytoplasm</location>
    </subcellularLocation>
</comment>
<comment type="similarity">
    <text evidence="1">Belongs to the NAD kinase family.</text>
</comment>
<gene>
    <name evidence="1" type="primary">nadK</name>
    <name type="ordered locus">Mboo_1352</name>
</gene>
<dbReference type="EC" id="2.7.1.23" evidence="1"/>
<dbReference type="EMBL" id="CP000780">
    <property type="protein sequence ID" value="ABS55870.1"/>
    <property type="molecule type" value="Genomic_DNA"/>
</dbReference>
<dbReference type="RefSeq" id="WP_012106903.1">
    <property type="nucleotide sequence ID" value="NC_009712.1"/>
</dbReference>
<dbReference type="SMR" id="A7I809"/>
<dbReference type="STRING" id="456442.Mboo_1352"/>
<dbReference type="GeneID" id="5410288"/>
<dbReference type="KEGG" id="mbn:Mboo_1352"/>
<dbReference type="eggNOG" id="arCOG01348">
    <property type="taxonomic scope" value="Archaea"/>
</dbReference>
<dbReference type="HOGENOM" id="CLU_008831_0_2_2"/>
<dbReference type="OrthoDB" id="77798at2157"/>
<dbReference type="Proteomes" id="UP000002408">
    <property type="component" value="Chromosome"/>
</dbReference>
<dbReference type="GO" id="GO:0005737">
    <property type="term" value="C:cytoplasm"/>
    <property type="evidence" value="ECO:0007669"/>
    <property type="project" value="UniProtKB-SubCell"/>
</dbReference>
<dbReference type="GO" id="GO:0005524">
    <property type="term" value="F:ATP binding"/>
    <property type="evidence" value="ECO:0007669"/>
    <property type="project" value="UniProtKB-KW"/>
</dbReference>
<dbReference type="GO" id="GO:0046872">
    <property type="term" value="F:metal ion binding"/>
    <property type="evidence" value="ECO:0007669"/>
    <property type="project" value="UniProtKB-UniRule"/>
</dbReference>
<dbReference type="GO" id="GO:0003951">
    <property type="term" value="F:NAD+ kinase activity"/>
    <property type="evidence" value="ECO:0007669"/>
    <property type="project" value="UniProtKB-UniRule"/>
</dbReference>
<dbReference type="GO" id="GO:0019674">
    <property type="term" value="P:NAD metabolic process"/>
    <property type="evidence" value="ECO:0007669"/>
    <property type="project" value="InterPro"/>
</dbReference>
<dbReference type="GO" id="GO:0006741">
    <property type="term" value="P:NADP biosynthetic process"/>
    <property type="evidence" value="ECO:0007669"/>
    <property type="project" value="UniProtKB-UniRule"/>
</dbReference>
<dbReference type="Gene3D" id="3.40.50.10330">
    <property type="entry name" value="Probable inorganic polyphosphate/atp-NAD kinase, domain 1"/>
    <property type="match status" value="1"/>
</dbReference>
<dbReference type="Gene3D" id="2.60.200.30">
    <property type="entry name" value="Probable inorganic polyphosphate/atp-NAD kinase, domain 2"/>
    <property type="match status" value="1"/>
</dbReference>
<dbReference type="HAMAP" id="MF_00361">
    <property type="entry name" value="NAD_kinase"/>
    <property type="match status" value="1"/>
</dbReference>
<dbReference type="InterPro" id="IPR017438">
    <property type="entry name" value="ATP-NAD_kinase_N"/>
</dbReference>
<dbReference type="InterPro" id="IPR017437">
    <property type="entry name" value="ATP-NAD_kinase_PpnK-typ_C"/>
</dbReference>
<dbReference type="InterPro" id="IPR016064">
    <property type="entry name" value="NAD/diacylglycerol_kinase_sf"/>
</dbReference>
<dbReference type="InterPro" id="IPR002504">
    <property type="entry name" value="NADK"/>
</dbReference>
<dbReference type="PANTHER" id="PTHR20275:SF43">
    <property type="entry name" value="BIFUNCTIONAL NADP PHOSPHATASE_NAD KINASE"/>
    <property type="match status" value="1"/>
</dbReference>
<dbReference type="PANTHER" id="PTHR20275">
    <property type="entry name" value="NAD KINASE"/>
    <property type="match status" value="1"/>
</dbReference>
<dbReference type="Pfam" id="PF01513">
    <property type="entry name" value="NAD_kinase"/>
    <property type="match status" value="1"/>
</dbReference>
<dbReference type="Pfam" id="PF20143">
    <property type="entry name" value="NAD_kinase_C"/>
    <property type="match status" value="1"/>
</dbReference>
<dbReference type="SUPFAM" id="SSF111331">
    <property type="entry name" value="NAD kinase/diacylglycerol kinase-like"/>
    <property type="match status" value="1"/>
</dbReference>
<feature type="chain" id="PRO_1000059877" description="NAD kinase">
    <location>
        <begin position="1"/>
        <end position="270"/>
    </location>
</feature>
<feature type="active site" description="Proton acceptor" evidence="1">
    <location>
        <position position="63"/>
    </location>
</feature>
<feature type="binding site" evidence="1">
    <location>
        <begin position="63"/>
        <end position="64"/>
    </location>
    <ligand>
        <name>NAD(+)</name>
        <dbReference type="ChEBI" id="CHEBI:57540"/>
    </ligand>
</feature>
<feature type="binding site" evidence="1">
    <location>
        <position position="68"/>
    </location>
    <ligand>
        <name>NAD(+)</name>
        <dbReference type="ChEBI" id="CHEBI:57540"/>
    </ligand>
</feature>
<feature type="binding site" evidence="1">
    <location>
        <begin position="131"/>
        <end position="132"/>
    </location>
    <ligand>
        <name>NAD(+)</name>
        <dbReference type="ChEBI" id="CHEBI:57540"/>
    </ligand>
</feature>
<feature type="binding site" evidence="1">
    <location>
        <position position="142"/>
    </location>
    <ligand>
        <name>NAD(+)</name>
        <dbReference type="ChEBI" id="CHEBI:57540"/>
    </ligand>
</feature>
<feature type="binding site" evidence="1">
    <location>
        <position position="159"/>
    </location>
    <ligand>
        <name>NAD(+)</name>
        <dbReference type="ChEBI" id="CHEBI:57540"/>
    </ligand>
</feature>
<feature type="binding site" evidence="1">
    <location>
        <position position="161"/>
    </location>
    <ligand>
        <name>NAD(+)</name>
        <dbReference type="ChEBI" id="CHEBI:57540"/>
    </ligand>
</feature>
<feature type="binding site" evidence="1">
    <location>
        <begin position="172"/>
        <end position="177"/>
    </location>
    <ligand>
        <name>NAD(+)</name>
        <dbReference type="ChEBI" id="CHEBI:57540"/>
    </ligand>
</feature>
<feature type="binding site" evidence="1">
    <location>
        <position position="196"/>
    </location>
    <ligand>
        <name>NAD(+)</name>
        <dbReference type="ChEBI" id="CHEBI:57540"/>
    </ligand>
</feature>
<feature type="binding site" evidence="1">
    <location>
        <position position="230"/>
    </location>
    <ligand>
        <name>NAD(+)</name>
        <dbReference type="ChEBI" id="CHEBI:57540"/>
    </ligand>
</feature>
<proteinExistence type="inferred from homology"/>
<evidence type="ECO:0000255" key="1">
    <source>
        <dbReference type="HAMAP-Rule" id="MF_00361"/>
    </source>
</evidence>
<protein>
    <recommendedName>
        <fullName evidence="1">NAD kinase</fullName>
        <ecNumber evidence="1">2.7.1.23</ecNumber>
    </recommendedName>
    <alternativeName>
        <fullName evidence="1">ATP-dependent NAD kinase</fullName>
    </alternativeName>
</protein>
<reference key="1">
    <citation type="journal article" date="2015" name="Microbiology">
        <title>Genome of Methanoregula boonei 6A8 reveals adaptations to oligotrophic peatland environments.</title>
        <authorList>
            <person name="Braeuer S."/>
            <person name="Cadillo-Quiroz H."/>
            <person name="Kyrpides N."/>
            <person name="Woyke T."/>
            <person name="Goodwin L."/>
            <person name="Detter C."/>
            <person name="Podell S."/>
            <person name="Yavitt J.B."/>
            <person name="Zinder S.H."/>
        </authorList>
    </citation>
    <scope>NUCLEOTIDE SEQUENCE [LARGE SCALE GENOMIC DNA]</scope>
    <source>
        <strain>DSM 21154 / JCM 14090 / 6A8</strain>
    </source>
</reference>
<sequence length="270" mass="29305">MKCFLVSRIDMPGALDCASRMKTALERAGHTVVLDPDTASMLGGSGHSINKVSADMAVVIGGDGTILRTVQQLHEQIPIIGINHGEVGFLADLEPEEAGAFVRSLAPGFDVEERMRLSLWNEEDHLGDALNEGLIVTTRPAKMLRFSILVDGRLTEQFRSDGILVSTPTGSTAYAMSAGGPIVDPRIEGFLLVPLAPYLLSSRPHLISSSRRLEIRLESSKPAKLVIDGQNTVELGSAVSLVIQKAASPARFIDVHRNFFEKVDRKLRKL</sequence>
<organism>
    <name type="scientific">Methanoregula boonei (strain DSM 21154 / JCM 14090 / 6A8)</name>
    <dbReference type="NCBI Taxonomy" id="456442"/>
    <lineage>
        <taxon>Archaea</taxon>
        <taxon>Methanobacteriati</taxon>
        <taxon>Methanobacteriota</taxon>
        <taxon>Stenosarchaea group</taxon>
        <taxon>Methanomicrobia</taxon>
        <taxon>Methanomicrobiales</taxon>
        <taxon>Methanoregulaceae</taxon>
        <taxon>Methanoregula</taxon>
    </lineage>
</organism>
<name>NADK_METB6</name>